<dbReference type="EC" id="6.1.1.21" evidence="1"/>
<dbReference type="EMBL" id="CP000947">
    <property type="protein sequence ID" value="ACA32397.1"/>
    <property type="molecule type" value="Genomic_DNA"/>
</dbReference>
<dbReference type="RefSeq" id="WP_012341556.1">
    <property type="nucleotide sequence ID" value="NC_010519.1"/>
</dbReference>
<dbReference type="SMR" id="B0USG9"/>
<dbReference type="STRING" id="228400.HSM_0730"/>
<dbReference type="GeneID" id="31487016"/>
<dbReference type="KEGG" id="hsm:HSM_0730"/>
<dbReference type="HOGENOM" id="CLU_025113_1_1_6"/>
<dbReference type="GO" id="GO:0005737">
    <property type="term" value="C:cytoplasm"/>
    <property type="evidence" value="ECO:0007669"/>
    <property type="project" value="UniProtKB-SubCell"/>
</dbReference>
<dbReference type="GO" id="GO:0005524">
    <property type="term" value="F:ATP binding"/>
    <property type="evidence" value="ECO:0007669"/>
    <property type="project" value="UniProtKB-UniRule"/>
</dbReference>
<dbReference type="GO" id="GO:0004821">
    <property type="term" value="F:histidine-tRNA ligase activity"/>
    <property type="evidence" value="ECO:0007669"/>
    <property type="project" value="UniProtKB-UniRule"/>
</dbReference>
<dbReference type="GO" id="GO:0006427">
    <property type="term" value="P:histidyl-tRNA aminoacylation"/>
    <property type="evidence" value="ECO:0007669"/>
    <property type="project" value="UniProtKB-UniRule"/>
</dbReference>
<dbReference type="CDD" id="cd00773">
    <property type="entry name" value="HisRS-like_core"/>
    <property type="match status" value="1"/>
</dbReference>
<dbReference type="CDD" id="cd00859">
    <property type="entry name" value="HisRS_anticodon"/>
    <property type="match status" value="1"/>
</dbReference>
<dbReference type="FunFam" id="3.30.930.10:FF:000005">
    <property type="entry name" value="Histidine--tRNA ligase"/>
    <property type="match status" value="1"/>
</dbReference>
<dbReference type="Gene3D" id="3.40.50.800">
    <property type="entry name" value="Anticodon-binding domain"/>
    <property type="match status" value="1"/>
</dbReference>
<dbReference type="Gene3D" id="3.30.930.10">
    <property type="entry name" value="Bira Bifunctional Protein, Domain 2"/>
    <property type="match status" value="1"/>
</dbReference>
<dbReference type="HAMAP" id="MF_00127">
    <property type="entry name" value="His_tRNA_synth"/>
    <property type="match status" value="1"/>
</dbReference>
<dbReference type="InterPro" id="IPR006195">
    <property type="entry name" value="aa-tRNA-synth_II"/>
</dbReference>
<dbReference type="InterPro" id="IPR045864">
    <property type="entry name" value="aa-tRNA-synth_II/BPL/LPL"/>
</dbReference>
<dbReference type="InterPro" id="IPR004154">
    <property type="entry name" value="Anticodon-bd"/>
</dbReference>
<dbReference type="InterPro" id="IPR036621">
    <property type="entry name" value="Anticodon-bd_dom_sf"/>
</dbReference>
<dbReference type="InterPro" id="IPR015807">
    <property type="entry name" value="His-tRNA-ligase"/>
</dbReference>
<dbReference type="InterPro" id="IPR041715">
    <property type="entry name" value="HisRS-like_core"/>
</dbReference>
<dbReference type="InterPro" id="IPR004516">
    <property type="entry name" value="HisRS/HisZ"/>
</dbReference>
<dbReference type="InterPro" id="IPR033656">
    <property type="entry name" value="HisRS_anticodon"/>
</dbReference>
<dbReference type="NCBIfam" id="TIGR00442">
    <property type="entry name" value="hisS"/>
    <property type="match status" value="1"/>
</dbReference>
<dbReference type="PANTHER" id="PTHR43707:SF1">
    <property type="entry name" value="HISTIDINE--TRNA LIGASE, MITOCHONDRIAL-RELATED"/>
    <property type="match status" value="1"/>
</dbReference>
<dbReference type="PANTHER" id="PTHR43707">
    <property type="entry name" value="HISTIDYL-TRNA SYNTHETASE"/>
    <property type="match status" value="1"/>
</dbReference>
<dbReference type="Pfam" id="PF03129">
    <property type="entry name" value="HGTP_anticodon"/>
    <property type="match status" value="1"/>
</dbReference>
<dbReference type="Pfam" id="PF13393">
    <property type="entry name" value="tRNA-synt_His"/>
    <property type="match status" value="1"/>
</dbReference>
<dbReference type="PIRSF" id="PIRSF001549">
    <property type="entry name" value="His-tRNA_synth"/>
    <property type="match status" value="1"/>
</dbReference>
<dbReference type="SUPFAM" id="SSF52954">
    <property type="entry name" value="Class II aaRS ABD-related"/>
    <property type="match status" value="1"/>
</dbReference>
<dbReference type="SUPFAM" id="SSF55681">
    <property type="entry name" value="Class II aaRS and biotin synthetases"/>
    <property type="match status" value="1"/>
</dbReference>
<dbReference type="PROSITE" id="PS50862">
    <property type="entry name" value="AA_TRNA_LIGASE_II"/>
    <property type="match status" value="1"/>
</dbReference>
<comment type="catalytic activity">
    <reaction evidence="1">
        <text>tRNA(His) + L-histidine + ATP = L-histidyl-tRNA(His) + AMP + diphosphate + H(+)</text>
        <dbReference type="Rhea" id="RHEA:17313"/>
        <dbReference type="Rhea" id="RHEA-COMP:9665"/>
        <dbReference type="Rhea" id="RHEA-COMP:9689"/>
        <dbReference type="ChEBI" id="CHEBI:15378"/>
        <dbReference type="ChEBI" id="CHEBI:30616"/>
        <dbReference type="ChEBI" id="CHEBI:33019"/>
        <dbReference type="ChEBI" id="CHEBI:57595"/>
        <dbReference type="ChEBI" id="CHEBI:78442"/>
        <dbReference type="ChEBI" id="CHEBI:78527"/>
        <dbReference type="ChEBI" id="CHEBI:456215"/>
        <dbReference type="EC" id="6.1.1.21"/>
    </reaction>
</comment>
<comment type="subunit">
    <text evidence="1">Homodimer.</text>
</comment>
<comment type="subcellular location">
    <subcellularLocation>
        <location evidence="1">Cytoplasm</location>
    </subcellularLocation>
</comment>
<comment type="similarity">
    <text evidence="1">Belongs to the class-II aminoacyl-tRNA synthetase family.</text>
</comment>
<sequence>MAKTIQAIRGMNDCSPTESLLWQWVEEKVRSVLQTYGYSEVRMPIVESTPLFARAIGEVTDVVSKEMYTFWDNDEQLTLRPEGTAGCVRAAIEHGWIYNNEQRLWYMGPMFRHERPQKGRYRQFHQVGVEVFGIANPEIDAELILLTARLWKQLGIFDHVTLQLNSIGSLESRQNYRSALVEFLQQHMDLLSEEEKERLVKNPLRILDTKNQVLQEVLNDAPKLLDYLDQESREHFSQLCDLLDAVGIQYEINPKLVRGLDYYNKTVFEWVTSALGAQGTVCGGGRYDGLVEQLGGHATCSVGFAMGLERLVLLVQEVNKQIVLPSAVDIYVVYFGEKTTLPAFQLAEKIRTELPHLRTMTHCGGGNFKKQFKRADKVGAKFALVIGETEVKTQQVVVKDLLGGAEQLSLALTDVVIYLKQAITQ</sequence>
<evidence type="ECO:0000255" key="1">
    <source>
        <dbReference type="HAMAP-Rule" id="MF_00127"/>
    </source>
</evidence>
<feature type="chain" id="PRO_1000076274" description="Histidine--tRNA ligase">
    <location>
        <begin position="1"/>
        <end position="425"/>
    </location>
</feature>
<proteinExistence type="inferred from homology"/>
<accession>B0USG9</accession>
<reference key="1">
    <citation type="submission" date="2008-02" db="EMBL/GenBank/DDBJ databases">
        <title>Complete sequence of Haemophilus somnus 2336.</title>
        <authorList>
            <consortium name="US DOE Joint Genome Institute"/>
            <person name="Siddaramappa S."/>
            <person name="Duncan A.J."/>
            <person name="Challacombe J.F."/>
            <person name="Rainey D."/>
            <person name="Gillaspy A.F."/>
            <person name="Carson M."/>
            <person name="Gipson J."/>
            <person name="Gipson M."/>
            <person name="Bruce D."/>
            <person name="Detter J.C."/>
            <person name="Han C.S."/>
            <person name="Land M."/>
            <person name="Tapia R."/>
            <person name="Thompson L.S."/>
            <person name="Orvis J."/>
            <person name="Zaitshik J."/>
            <person name="Barnes G."/>
            <person name="Brettin T.S."/>
            <person name="Dyer D.W."/>
            <person name="Inzana T.J."/>
        </authorList>
    </citation>
    <scope>NUCLEOTIDE SEQUENCE [LARGE SCALE GENOMIC DNA]</scope>
    <source>
        <strain>2336</strain>
    </source>
</reference>
<organism>
    <name type="scientific">Histophilus somni (strain 2336)</name>
    <name type="common">Haemophilus somnus</name>
    <dbReference type="NCBI Taxonomy" id="228400"/>
    <lineage>
        <taxon>Bacteria</taxon>
        <taxon>Pseudomonadati</taxon>
        <taxon>Pseudomonadota</taxon>
        <taxon>Gammaproteobacteria</taxon>
        <taxon>Pasteurellales</taxon>
        <taxon>Pasteurellaceae</taxon>
        <taxon>Histophilus</taxon>
    </lineage>
</organism>
<name>SYH_HISS2</name>
<gene>
    <name evidence="1" type="primary">hisS</name>
    <name type="ordered locus">HSM_0730</name>
</gene>
<keyword id="KW-0030">Aminoacyl-tRNA synthetase</keyword>
<keyword id="KW-0067">ATP-binding</keyword>
<keyword id="KW-0963">Cytoplasm</keyword>
<keyword id="KW-0436">Ligase</keyword>
<keyword id="KW-0547">Nucleotide-binding</keyword>
<keyword id="KW-0648">Protein biosynthesis</keyword>
<protein>
    <recommendedName>
        <fullName evidence="1">Histidine--tRNA ligase</fullName>
        <ecNumber evidence="1">6.1.1.21</ecNumber>
    </recommendedName>
    <alternativeName>
        <fullName evidence="1">Histidyl-tRNA synthetase</fullName>
        <shortName evidence="1">HisRS</shortName>
    </alternativeName>
</protein>